<gene>
    <name evidence="1" type="primary">rbcL</name>
</gene>
<proteinExistence type="inferred from homology"/>
<keyword id="KW-0113">Calvin cycle</keyword>
<keyword id="KW-0120">Carbon dioxide fixation</keyword>
<keyword id="KW-0150">Chloroplast</keyword>
<keyword id="KW-1015">Disulfide bond</keyword>
<keyword id="KW-0456">Lyase</keyword>
<keyword id="KW-0460">Magnesium</keyword>
<keyword id="KW-0479">Metal-binding</keyword>
<keyword id="KW-0488">Methylation</keyword>
<keyword id="KW-0503">Monooxygenase</keyword>
<keyword id="KW-0560">Oxidoreductase</keyword>
<keyword id="KW-0601">Photorespiration</keyword>
<keyword id="KW-0602">Photosynthesis</keyword>
<keyword id="KW-0934">Plastid</keyword>
<protein>
    <recommendedName>
        <fullName evidence="1">Ribulose bisphosphate carboxylase large chain</fullName>
        <shortName evidence="1">RuBisCO large subunit</shortName>
        <ecNumber evidence="1">4.1.1.39</ecNumber>
    </recommendedName>
</protein>
<dbReference type="EC" id="4.1.1.39" evidence="1"/>
<dbReference type="EMBL" id="L14410">
    <property type="protein sequence ID" value="AAA19768.1"/>
    <property type="molecule type" value="Genomic_DNA"/>
</dbReference>
<dbReference type="GO" id="GO:0009507">
    <property type="term" value="C:chloroplast"/>
    <property type="evidence" value="ECO:0007669"/>
    <property type="project" value="UniProtKB-SubCell"/>
</dbReference>
<dbReference type="GO" id="GO:0000287">
    <property type="term" value="F:magnesium ion binding"/>
    <property type="evidence" value="ECO:0007669"/>
    <property type="project" value="InterPro"/>
</dbReference>
<dbReference type="GO" id="GO:0004497">
    <property type="term" value="F:monooxygenase activity"/>
    <property type="evidence" value="ECO:0007669"/>
    <property type="project" value="UniProtKB-KW"/>
</dbReference>
<dbReference type="GO" id="GO:0016984">
    <property type="term" value="F:ribulose-bisphosphate carboxylase activity"/>
    <property type="evidence" value="ECO:0007669"/>
    <property type="project" value="UniProtKB-EC"/>
</dbReference>
<dbReference type="GO" id="GO:0009853">
    <property type="term" value="P:photorespiration"/>
    <property type="evidence" value="ECO:0007669"/>
    <property type="project" value="UniProtKB-KW"/>
</dbReference>
<dbReference type="GO" id="GO:0019253">
    <property type="term" value="P:reductive pentose-phosphate cycle"/>
    <property type="evidence" value="ECO:0007669"/>
    <property type="project" value="UniProtKB-KW"/>
</dbReference>
<dbReference type="CDD" id="cd08212">
    <property type="entry name" value="RuBisCO_large_I"/>
    <property type="match status" value="1"/>
</dbReference>
<dbReference type="FunFam" id="3.20.20.110:FF:000001">
    <property type="entry name" value="Ribulose bisphosphate carboxylase large chain"/>
    <property type="match status" value="1"/>
</dbReference>
<dbReference type="FunFam" id="3.30.70.150:FF:000001">
    <property type="entry name" value="Ribulose bisphosphate carboxylase large chain"/>
    <property type="match status" value="1"/>
</dbReference>
<dbReference type="Gene3D" id="3.20.20.110">
    <property type="entry name" value="Ribulose bisphosphate carboxylase, large subunit, C-terminal domain"/>
    <property type="match status" value="1"/>
</dbReference>
<dbReference type="Gene3D" id="3.30.70.150">
    <property type="entry name" value="RuBisCO large subunit, N-terminal domain"/>
    <property type="match status" value="1"/>
</dbReference>
<dbReference type="HAMAP" id="MF_01338">
    <property type="entry name" value="RuBisCO_L_type1"/>
    <property type="match status" value="1"/>
</dbReference>
<dbReference type="InterPro" id="IPR033966">
    <property type="entry name" value="RuBisCO"/>
</dbReference>
<dbReference type="InterPro" id="IPR020878">
    <property type="entry name" value="RuBisCo_large_chain_AS"/>
</dbReference>
<dbReference type="InterPro" id="IPR000685">
    <property type="entry name" value="RuBisCO_lsu_C"/>
</dbReference>
<dbReference type="InterPro" id="IPR036376">
    <property type="entry name" value="RuBisCO_lsu_C_sf"/>
</dbReference>
<dbReference type="InterPro" id="IPR017443">
    <property type="entry name" value="RuBisCO_lsu_fd_N"/>
</dbReference>
<dbReference type="InterPro" id="IPR036422">
    <property type="entry name" value="RuBisCO_lsu_N_sf"/>
</dbReference>
<dbReference type="InterPro" id="IPR020888">
    <property type="entry name" value="RuBisCO_lsuI"/>
</dbReference>
<dbReference type="NCBIfam" id="NF003252">
    <property type="entry name" value="PRK04208.1"/>
    <property type="match status" value="1"/>
</dbReference>
<dbReference type="PANTHER" id="PTHR42704">
    <property type="entry name" value="RIBULOSE BISPHOSPHATE CARBOXYLASE"/>
    <property type="match status" value="1"/>
</dbReference>
<dbReference type="PANTHER" id="PTHR42704:SF15">
    <property type="entry name" value="RIBULOSE BISPHOSPHATE CARBOXYLASE LARGE CHAIN"/>
    <property type="match status" value="1"/>
</dbReference>
<dbReference type="Pfam" id="PF00016">
    <property type="entry name" value="RuBisCO_large"/>
    <property type="match status" value="1"/>
</dbReference>
<dbReference type="Pfam" id="PF02788">
    <property type="entry name" value="RuBisCO_large_N"/>
    <property type="match status" value="1"/>
</dbReference>
<dbReference type="SFLD" id="SFLDG01052">
    <property type="entry name" value="RuBisCO"/>
    <property type="match status" value="1"/>
</dbReference>
<dbReference type="SFLD" id="SFLDS00014">
    <property type="entry name" value="RuBisCO"/>
    <property type="match status" value="1"/>
</dbReference>
<dbReference type="SFLD" id="SFLDG00301">
    <property type="entry name" value="RuBisCO-like_proteins"/>
    <property type="match status" value="1"/>
</dbReference>
<dbReference type="SUPFAM" id="SSF51649">
    <property type="entry name" value="RuBisCo, C-terminal domain"/>
    <property type="match status" value="1"/>
</dbReference>
<dbReference type="SUPFAM" id="SSF54966">
    <property type="entry name" value="RuBisCO, large subunit, small (N-terminal) domain"/>
    <property type="match status" value="1"/>
</dbReference>
<dbReference type="PROSITE" id="PS00157">
    <property type="entry name" value="RUBISCO_LARGE"/>
    <property type="match status" value="1"/>
</dbReference>
<feature type="chain" id="PRO_0000062598" description="Ribulose bisphosphate carboxylase large chain">
    <location>
        <begin position="1" status="less than"/>
        <end position="471"/>
    </location>
</feature>
<feature type="active site" description="Proton acceptor" evidence="1">
    <location>
        <position position="166"/>
    </location>
</feature>
<feature type="active site" description="Proton acceptor" evidence="1">
    <location>
        <position position="285"/>
    </location>
</feature>
<feature type="binding site" description="in homodimeric partner" evidence="1">
    <location>
        <position position="114"/>
    </location>
    <ligand>
        <name>substrate</name>
    </ligand>
</feature>
<feature type="binding site" evidence="1">
    <location>
        <position position="164"/>
    </location>
    <ligand>
        <name>substrate</name>
    </ligand>
</feature>
<feature type="binding site" evidence="1">
    <location>
        <position position="168"/>
    </location>
    <ligand>
        <name>substrate</name>
    </ligand>
</feature>
<feature type="binding site" description="via carbamate group" evidence="1">
    <location>
        <position position="192"/>
    </location>
    <ligand>
        <name>Mg(2+)</name>
        <dbReference type="ChEBI" id="CHEBI:18420"/>
    </ligand>
</feature>
<feature type="binding site" evidence="1">
    <location>
        <position position="194"/>
    </location>
    <ligand>
        <name>Mg(2+)</name>
        <dbReference type="ChEBI" id="CHEBI:18420"/>
    </ligand>
</feature>
<feature type="binding site" evidence="1">
    <location>
        <position position="195"/>
    </location>
    <ligand>
        <name>Mg(2+)</name>
        <dbReference type="ChEBI" id="CHEBI:18420"/>
    </ligand>
</feature>
<feature type="binding site" evidence="1">
    <location>
        <position position="286"/>
    </location>
    <ligand>
        <name>substrate</name>
    </ligand>
</feature>
<feature type="binding site" evidence="1">
    <location>
        <position position="318"/>
    </location>
    <ligand>
        <name>substrate</name>
    </ligand>
</feature>
<feature type="binding site" evidence="1">
    <location>
        <position position="370"/>
    </location>
    <ligand>
        <name>substrate</name>
    </ligand>
</feature>
<feature type="site" description="Transition state stabilizer" evidence="1">
    <location>
        <position position="325"/>
    </location>
</feature>
<feature type="modified residue" description="N6,N6,N6-trimethyllysine" evidence="1">
    <location>
        <position position="5"/>
    </location>
</feature>
<feature type="modified residue" description="N6-carboxylysine" evidence="1">
    <location>
        <position position="192"/>
    </location>
</feature>
<feature type="disulfide bond" description="Interchain; in linked form" evidence="1">
    <location>
        <position position="238"/>
    </location>
</feature>
<feature type="non-terminal residue">
    <location>
        <position position="1"/>
    </location>
</feature>
<comment type="function">
    <text evidence="1">RuBisCO catalyzes two reactions: the carboxylation of D-ribulose 1,5-bisphosphate, the primary event in carbon dioxide fixation, as well as the oxidative fragmentation of the pentose substrate in the photorespiration process. Both reactions occur simultaneously and in competition at the same active site.</text>
</comment>
<comment type="catalytic activity">
    <reaction evidence="1">
        <text>2 (2R)-3-phosphoglycerate + 2 H(+) = D-ribulose 1,5-bisphosphate + CO2 + H2O</text>
        <dbReference type="Rhea" id="RHEA:23124"/>
        <dbReference type="ChEBI" id="CHEBI:15377"/>
        <dbReference type="ChEBI" id="CHEBI:15378"/>
        <dbReference type="ChEBI" id="CHEBI:16526"/>
        <dbReference type="ChEBI" id="CHEBI:57870"/>
        <dbReference type="ChEBI" id="CHEBI:58272"/>
        <dbReference type="EC" id="4.1.1.39"/>
    </reaction>
</comment>
<comment type="catalytic activity">
    <reaction evidence="1">
        <text>D-ribulose 1,5-bisphosphate + O2 = 2-phosphoglycolate + (2R)-3-phosphoglycerate + 2 H(+)</text>
        <dbReference type="Rhea" id="RHEA:36631"/>
        <dbReference type="ChEBI" id="CHEBI:15378"/>
        <dbReference type="ChEBI" id="CHEBI:15379"/>
        <dbReference type="ChEBI" id="CHEBI:57870"/>
        <dbReference type="ChEBI" id="CHEBI:58033"/>
        <dbReference type="ChEBI" id="CHEBI:58272"/>
    </reaction>
</comment>
<comment type="cofactor">
    <cofactor evidence="1">
        <name>Mg(2+)</name>
        <dbReference type="ChEBI" id="CHEBI:18420"/>
    </cofactor>
    <text evidence="1">Binds 1 Mg(2+) ion per subunit.</text>
</comment>
<comment type="subunit">
    <text evidence="1">Heterohexadecamer of 8 large chains and 8 small chains; disulfide-linked. The disulfide link is formed within the large subunit homodimers.</text>
</comment>
<comment type="subcellular location">
    <subcellularLocation>
        <location>Plastid</location>
        <location>Chloroplast</location>
    </subcellularLocation>
</comment>
<comment type="PTM">
    <text evidence="1">The disulfide bond which can form in the large chain dimeric partners within the hexadecamer appears to be associated with oxidative stress and protein turnover.</text>
</comment>
<comment type="miscellaneous">
    <text evidence="1">The basic functional RuBisCO is composed of a large chain homodimer in a 'head-to-tail' conformation. In form I RuBisCO this homodimer is arranged in a barrel-like tetramer with the small subunits forming a tetrameric 'cap' on each end of the 'barrel'.</text>
</comment>
<comment type="similarity">
    <text evidence="1">Belongs to the RuBisCO large chain family. Type I subfamily.</text>
</comment>
<name>RBL_STRNX</name>
<accession>P36489</accession>
<evidence type="ECO:0000255" key="1">
    <source>
        <dbReference type="HAMAP-Rule" id="MF_01338"/>
    </source>
</evidence>
<geneLocation type="chloroplast"/>
<reference key="1">
    <citation type="journal article" date="1993" name="Ann. Mo. Bot. Gard.">
        <title>A parsimony analysis of the Asteridae sensu lato based on rbcL sequences.</title>
        <authorList>
            <person name="Olmstead R.G."/>
            <person name="Bremer B."/>
            <person name="Scott K.M."/>
            <person name="Palmer J.D."/>
        </authorList>
        <dbReference type="AGRICOLA" id="IND93053816"/>
    </citation>
    <scope>NUCLEOTIDE SEQUENCE [GENOMIC DNA]</scope>
</reference>
<organism>
    <name type="scientific">Strychnos nux-vomica</name>
    <name type="common">Poison nut</name>
    <name type="synonym">Strychnine tree</name>
    <dbReference type="NCBI Taxonomy" id="28545"/>
    <lineage>
        <taxon>Eukaryota</taxon>
        <taxon>Viridiplantae</taxon>
        <taxon>Streptophyta</taxon>
        <taxon>Embryophyta</taxon>
        <taxon>Tracheophyta</taxon>
        <taxon>Spermatophyta</taxon>
        <taxon>Magnoliopsida</taxon>
        <taxon>eudicotyledons</taxon>
        <taxon>Gunneridae</taxon>
        <taxon>Pentapetalae</taxon>
        <taxon>asterids</taxon>
        <taxon>lamiids</taxon>
        <taxon>Gentianales</taxon>
        <taxon>Loganiaceae</taxon>
        <taxon>Strychnos</taxon>
    </lineage>
</organism>
<sequence>SVGFKAGVKEYKLTYYTPEYETKDTDILAAFRVTPQPGVPPEEAGAAVAAESSTGTWTTVWTDGLTSLDRYKGRCYHIEPVAGEEDQYIAYVAYPLDLFEEGSVTNMFTSIVGNVFGFKALRALRLEDLRIPVAYIKTFQGPPHAIQVERDKLNKYGRPLLGCTIKPKLGLSAKNYGRAVYECLRGGLDFTKDDENVNSQPFMRWRDRFLFCAEAXYKAQAETGEIKGHYLNATAGTCEEMIKRAVFARELGVPIVMHDYLTGGFTANTSLAHYCRDNGLLLHIHRAMHAVIDRQKNHGMHFRVLXKALRMSGGDHIHAGTVVGKLEGERDITLGFVDLLRDDFIEKDRSRGIYFTQDWVSLPGVIPVASGGIHVWHMPALTEIFGDDAVLQFGGGTLGHPWGNAPGAVANRVALEACVKARNEGRDLAAEGNDIIREASKWSPELAAACEVWKEIRFNFQAVDTLDPLKS</sequence>